<reference key="1">
    <citation type="journal article" date="2004" name="Nat. Biotechnol.">
        <title>The genome sequence of the anaerobic, sulfate-reducing bacterium Desulfovibrio vulgaris Hildenborough.</title>
        <authorList>
            <person name="Heidelberg J.F."/>
            <person name="Seshadri R."/>
            <person name="Haveman S.A."/>
            <person name="Hemme C.L."/>
            <person name="Paulsen I.T."/>
            <person name="Kolonay J.F."/>
            <person name="Eisen J.A."/>
            <person name="Ward N.L."/>
            <person name="Methe B.A."/>
            <person name="Brinkac L.M."/>
            <person name="Daugherty S.C."/>
            <person name="DeBoy R.T."/>
            <person name="Dodson R.J."/>
            <person name="Durkin A.S."/>
            <person name="Madupu R."/>
            <person name="Nelson W.C."/>
            <person name="Sullivan S.A."/>
            <person name="Fouts D.E."/>
            <person name="Haft D.H."/>
            <person name="Selengut J."/>
            <person name="Peterson J.D."/>
            <person name="Davidsen T.M."/>
            <person name="Zafar N."/>
            <person name="Zhou L."/>
            <person name="Radune D."/>
            <person name="Dimitrov G."/>
            <person name="Hance M."/>
            <person name="Tran K."/>
            <person name="Khouri H.M."/>
            <person name="Gill J."/>
            <person name="Utterback T.R."/>
            <person name="Feldblyum T.V."/>
            <person name="Wall J.D."/>
            <person name="Voordouw G."/>
            <person name="Fraser C.M."/>
        </authorList>
    </citation>
    <scope>NUCLEOTIDE SEQUENCE [LARGE SCALE GENOMIC DNA]</scope>
    <source>
        <strain>ATCC 29579 / DSM 644 / CCUG 34227 / NCIMB 8303 / VKM B-1760 / Hildenborough</strain>
    </source>
</reference>
<sequence length="183" mass="20122">MTGNIVARRYARALFALGKKSGLSDLETFGNDLAALAGTLETAPELVRMFRNPVFTPDEKRNVIAKLLDKLKVCPTVRNFCLLLADRERLAFIQDIQAYYGILLDAEKGVIRGELVTAIELANAKRDKVKAQLEAQAGRKLELGFSVDKNILGGVVLKVGDRILDASLRAQLGILKDNIKRGE</sequence>
<organism>
    <name type="scientific">Nitratidesulfovibrio vulgaris (strain ATCC 29579 / DSM 644 / CCUG 34227 / NCIMB 8303 / VKM B-1760 / Hildenborough)</name>
    <name type="common">Desulfovibrio vulgaris</name>
    <dbReference type="NCBI Taxonomy" id="882"/>
    <lineage>
        <taxon>Bacteria</taxon>
        <taxon>Pseudomonadati</taxon>
        <taxon>Thermodesulfobacteriota</taxon>
        <taxon>Desulfovibrionia</taxon>
        <taxon>Desulfovibrionales</taxon>
        <taxon>Desulfovibrionaceae</taxon>
        <taxon>Nitratidesulfovibrio</taxon>
    </lineage>
</organism>
<comment type="function">
    <text evidence="1">F(1)F(0) ATP synthase produces ATP from ADP in the presence of a proton or sodium gradient. F-type ATPases consist of two structural domains, F(1) containing the extramembraneous catalytic core and F(0) containing the membrane proton channel, linked together by a central stalk and a peripheral stalk. During catalysis, ATP synthesis in the catalytic domain of F(1) is coupled via a rotary mechanism of the central stalk subunits to proton translocation.</text>
</comment>
<comment type="function">
    <text evidence="1">This protein is part of the stalk that links CF(0) to CF(1). It either transmits conformational changes from CF(0) to CF(1) or is implicated in proton conduction.</text>
</comment>
<comment type="subunit">
    <text evidence="1">F-type ATPases have 2 components, F(1) - the catalytic core - and F(0) - the membrane proton channel. F(1) has five subunits: alpha(3), beta(3), gamma(1), delta(1), epsilon(1). F(0) has three main subunits: a(1), b(2) and c(10-14). The alpha and beta chains form an alternating ring which encloses part of the gamma chain. F(1) is attached to F(0) by a central stalk formed by the gamma and epsilon chains, while a peripheral stalk is formed by the delta and b chains.</text>
</comment>
<comment type="subcellular location">
    <subcellularLocation>
        <location evidence="1">Cell inner membrane</location>
        <topology evidence="1">Peripheral membrane protein</topology>
    </subcellularLocation>
</comment>
<comment type="similarity">
    <text evidence="1">Belongs to the ATPase delta chain family.</text>
</comment>
<accession>Q72E01</accession>
<protein>
    <recommendedName>
        <fullName evidence="1">ATP synthase subunit delta</fullName>
    </recommendedName>
    <alternativeName>
        <fullName evidence="1">ATP synthase F(1) sector subunit delta</fullName>
    </alternativeName>
    <alternativeName>
        <fullName evidence="1">F-type ATPase subunit delta</fullName>
        <shortName evidence="1">F-ATPase subunit delta</shortName>
    </alternativeName>
</protein>
<feature type="chain" id="PRO_0000370966" description="ATP synthase subunit delta">
    <location>
        <begin position="1"/>
        <end position="183"/>
    </location>
</feature>
<gene>
    <name evidence="1" type="primary">atpH</name>
    <name type="ordered locus">DVU_0778</name>
</gene>
<dbReference type="EMBL" id="AE017285">
    <property type="protein sequence ID" value="AAS95258.1"/>
    <property type="molecule type" value="Genomic_DNA"/>
</dbReference>
<dbReference type="RefSeq" id="WP_010938079.1">
    <property type="nucleotide sequence ID" value="NC_002937.3"/>
</dbReference>
<dbReference type="RefSeq" id="YP_009999.1">
    <property type="nucleotide sequence ID" value="NC_002937.3"/>
</dbReference>
<dbReference type="SMR" id="Q72E01"/>
<dbReference type="IntAct" id="Q72E01">
    <property type="interactions" value="3"/>
</dbReference>
<dbReference type="STRING" id="882.DVU_0778"/>
<dbReference type="PaxDb" id="882-DVU_0778"/>
<dbReference type="EnsemblBacteria" id="AAS95258">
    <property type="protein sequence ID" value="AAS95258"/>
    <property type="gene ID" value="DVU_0778"/>
</dbReference>
<dbReference type="KEGG" id="dvu:DVU_0778"/>
<dbReference type="PATRIC" id="fig|882.5.peg.733"/>
<dbReference type="eggNOG" id="COG0712">
    <property type="taxonomic scope" value="Bacteria"/>
</dbReference>
<dbReference type="HOGENOM" id="CLU_085114_4_1_7"/>
<dbReference type="OrthoDB" id="9802471at2"/>
<dbReference type="PhylomeDB" id="Q72E01"/>
<dbReference type="Proteomes" id="UP000002194">
    <property type="component" value="Chromosome"/>
</dbReference>
<dbReference type="GO" id="GO:0005886">
    <property type="term" value="C:plasma membrane"/>
    <property type="evidence" value="ECO:0007669"/>
    <property type="project" value="UniProtKB-SubCell"/>
</dbReference>
<dbReference type="GO" id="GO:0045259">
    <property type="term" value="C:proton-transporting ATP synthase complex"/>
    <property type="evidence" value="ECO:0007669"/>
    <property type="project" value="UniProtKB-KW"/>
</dbReference>
<dbReference type="GO" id="GO:0046933">
    <property type="term" value="F:proton-transporting ATP synthase activity, rotational mechanism"/>
    <property type="evidence" value="ECO:0007669"/>
    <property type="project" value="UniProtKB-UniRule"/>
</dbReference>
<dbReference type="Gene3D" id="1.10.520.20">
    <property type="entry name" value="N-terminal domain of the delta subunit of the F1F0-ATP synthase"/>
    <property type="match status" value="1"/>
</dbReference>
<dbReference type="HAMAP" id="MF_01416">
    <property type="entry name" value="ATP_synth_delta_bact"/>
    <property type="match status" value="1"/>
</dbReference>
<dbReference type="InterPro" id="IPR026015">
    <property type="entry name" value="ATP_synth_OSCP/delta_N_sf"/>
</dbReference>
<dbReference type="InterPro" id="IPR020781">
    <property type="entry name" value="ATPase_OSCP/d_CS"/>
</dbReference>
<dbReference type="InterPro" id="IPR000711">
    <property type="entry name" value="ATPase_OSCP/dsu"/>
</dbReference>
<dbReference type="NCBIfam" id="TIGR01145">
    <property type="entry name" value="ATP_synt_delta"/>
    <property type="match status" value="1"/>
</dbReference>
<dbReference type="PANTHER" id="PTHR11910">
    <property type="entry name" value="ATP SYNTHASE DELTA CHAIN"/>
    <property type="match status" value="1"/>
</dbReference>
<dbReference type="Pfam" id="PF00213">
    <property type="entry name" value="OSCP"/>
    <property type="match status" value="1"/>
</dbReference>
<dbReference type="PRINTS" id="PR00125">
    <property type="entry name" value="ATPASEDELTA"/>
</dbReference>
<dbReference type="SUPFAM" id="SSF47928">
    <property type="entry name" value="N-terminal domain of the delta subunit of the F1F0-ATP synthase"/>
    <property type="match status" value="1"/>
</dbReference>
<dbReference type="PROSITE" id="PS00389">
    <property type="entry name" value="ATPASE_DELTA"/>
    <property type="match status" value="1"/>
</dbReference>
<evidence type="ECO:0000255" key="1">
    <source>
        <dbReference type="HAMAP-Rule" id="MF_01416"/>
    </source>
</evidence>
<proteinExistence type="inferred from homology"/>
<name>ATPD_NITV2</name>
<keyword id="KW-0066">ATP synthesis</keyword>
<keyword id="KW-0997">Cell inner membrane</keyword>
<keyword id="KW-1003">Cell membrane</keyword>
<keyword id="KW-0139">CF(1)</keyword>
<keyword id="KW-0375">Hydrogen ion transport</keyword>
<keyword id="KW-0406">Ion transport</keyword>
<keyword id="KW-0472">Membrane</keyword>
<keyword id="KW-1185">Reference proteome</keyword>
<keyword id="KW-0813">Transport</keyword>